<keyword id="KW-0378">Hydrolase</keyword>
<keyword id="KW-1185">Reference proteome</keyword>
<gene>
    <name evidence="4" type="primary">alnB</name>
    <name type="ORF">ANIA_11199</name>
</gene>
<evidence type="ECO:0000250" key="1">
    <source>
        <dbReference type="UniProtKB" id="P38777"/>
    </source>
</evidence>
<evidence type="ECO:0000269" key="2">
    <source>
    </source>
</evidence>
<evidence type="ECO:0000269" key="3">
    <source>
    </source>
</evidence>
<evidence type="ECO:0000303" key="4">
    <source>
    </source>
</evidence>
<evidence type="ECO:0000305" key="5"/>
<evidence type="ECO:0000305" key="6">
    <source>
    </source>
</evidence>
<feature type="chain" id="PRO_0000445940" description="Esterase alnB">
    <location>
        <begin position="1"/>
        <end position="284"/>
    </location>
</feature>
<feature type="active site" description="Charge relay system" evidence="1">
    <location>
        <position position="93"/>
    </location>
</feature>
<feature type="active site" description="Charge relay system" evidence="1">
    <location>
        <position position="226"/>
    </location>
</feature>
<feature type="active site" description="Charge relay system" evidence="1">
    <location>
        <position position="255"/>
    </location>
</feature>
<protein>
    <recommendedName>
        <fullName evidence="4">Esterase alnB</fullName>
        <ecNumber evidence="6">3.1.2.-</ecNumber>
    </recommendedName>
    <alternativeName>
        <fullName evidence="4">Asperlin biosynthesis cluster protein B</fullName>
    </alternativeName>
</protein>
<sequence>MPKILCLHGYGTSASILQHQLGPFMAAADPSYEFVFLEGEIECQKAQGLGPFVKGPFLCYNESFAPADIQESCDLIDEMIQAAGPFDGIIGFSQGGSVALSYLLQRQIDGHPPPFRWAVFFSTVIAFAPNDTFGSNILANLTDHEIRLLDGYPATDLSSLHPLTRALCETTAQTFYSAKTGGFISPNTPIAEFSKRDDPSQPRVFHPALLGDRIPIPTVHITGRKDNSLMVGLSVLVQGLCDQRLIRSLTHSGGHNVPRSADDVRAAWAAVDWAIQHSQKQHIW</sequence>
<comment type="function">
    <text evidence="3">Esterase; part of the gene cluster that mediates the biosynthesis of asperlin, a polyketide showing anti-inflammatory, antitumor and antibiotic activities (PubMed:30339758). The first step of the asperlin biosynthesis is the production of the intermediate 2,4,6-octatrienoic acid by the highly redusing polyketide synthase alnA with cleavage of the PKS product by the esterase alnB (PubMed:30339758). 2,4,6-octatrienoic acid is further converted to asperlin via several steps involving the remaining enzymes from the cluster (PubMed:30339758).</text>
</comment>
<comment type="pathway">
    <text evidence="3">Polyketide biosynthesis.</text>
</comment>
<comment type="induction">
    <text evidence="3">Expression is controlled by the asperlin biosynthesis cluster-specific transcription factor alnR.</text>
</comment>
<comment type="disruption phenotype">
    <text evidence="3">Fully eliminates the production of asperlin.</text>
</comment>
<comment type="biotechnology">
    <text evidence="2">2,4,6-octatrienoic acid is a particularly interesting compound because of its potential as a natural tanning agent for human skin. It is a promoter of melanogenesis and antioxidant defense in melanocytes in vitro and in vivo, topically and systemically. Pigmentation is a powerful protectant from UV damage and skin cancer, and octatrienoic acid is an attractive natural photoprotectant.</text>
</comment>
<comment type="similarity">
    <text evidence="5">Belongs to the LovG family.</text>
</comment>
<dbReference type="EC" id="3.1.2.-" evidence="6"/>
<dbReference type="EMBL" id="BN001306">
    <property type="protein sequence ID" value="CBF82302.1"/>
    <property type="molecule type" value="Genomic_DNA"/>
</dbReference>
<dbReference type="STRING" id="227321.C8VJR6"/>
<dbReference type="EnsemblFungi" id="CBF82302">
    <property type="protein sequence ID" value="CBF82302"/>
    <property type="gene ID" value="ANIA_11199"/>
</dbReference>
<dbReference type="VEuPathDB" id="FungiDB:AN11199"/>
<dbReference type="eggNOG" id="KOG2551">
    <property type="taxonomic scope" value="Eukaryota"/>
</dbReference>
<dbReference type="HOGENOM" id="CLU_051938_4_1_1"/>
<dbReference type="InParanoid" id="C8VJR6"/>
<dbReference type="OMA" id="YVESEGP"/>
<dbReference type="OrthoDB" id="414698at2759"/>
<dbReference type="Proteomes" id="UP000000560">
    <property type="component" value="Chromosome VI"/>
</dbReference>
<dbReference type="GO" id="GO:0005737">
    <property type="term" value="C:cytoplasm"/>
    <property type="evidence" value="ECO:0000318"/>
    <property type="project" value="GO_Central"/>
</dbReference>
<dbReference type="GO" id="GO:0005634">
    <property type="term" value="C:nucleus"/>
    <property type="evidence" value="ECO:0000318"/>
    <property type="project" value="GO_Central"/>
</dbReference>
<dbReference type="GO" id="GO:0016787">
    <property type="term" value="F:hydrolase activity"/>
    <property type="evidence" value="ECO:0000318"/>
    <property type="project" value="GO_Central"/>
</dbReference>
<dbReference type="GO" id="GO:0019748">
    <property type="term" value="P:secondary metabolic process"/>
    <property type="evidence" value="ECO:0000318"/>
    <property type="project" value="GO_Central"/>
</dbReference>
<dbReference type="Gene3D" id="3.40.50.1820">
    <property type="entry name" value="alpha/beta hydrolase"/>
    <property type="match status" value="1"/>
</dbReference>
<dbReference type="InterPro" id="IPR029058">
    <property type="entry name" value="AB_hydrolase_fold"/>
</dbReference>
<dbReference type="InterPro" id="IPR005645">
    <property type="entry name" value="FSH-like_dom"/>
</dbReference>
<dbReference type="InterPro" id="IPR050593">
    <property type="entry name" value="LovG"/>
</dbReference>
<dbReference type="PANTHER" id="PTHR48070:SF4">
    <property type="entry name" value="ESTERASE ALNB"/>
    <property type="match status" value="1"/>
</dbReference>
<dbReference type="PANTHER" id="PTHR48070">
    <property type="entry name" value="ESTERASE OVCA2"/>
    <property type="match status" value="1"/>
</dbReference>
<dbReference type="Pfam" id="PF03959">
    <property type="entry name" value="FSH1"/>
    <property type="match status" value="1"/>
</dbReference>
<dbReference type="SUPFAM" id="SSF53474">
    <property type="entry name" value="alpha/beta-Hydrolases"/>
    <property type="match status" value="1"/>
</dbReference>
<organism>
    <name type="scientific">Emericella nidulans (strain FGSC A4 / ATCC 38163 / CBS 112.46 / NRRL 194 / M139)</name>
    <name type="common">Aspergillus nidulans</name>
    <dbReference type="NCBI Taxonomy" id="227321"/>
    <lineage>
        <taxon>Eukaryota</taxon>
        <taxon>Fungi</taxon>
        <taxon>Dikarya</taxon>
        <taxon>Ascomycota</taxon>
        <taxon>Pezizomycotina</taxon>
        <taxon>Eurotiomycetes</taxon>
        <taxon>Eurotiomycetidae</taxon>
        <taxon>Eurotiales</taxon>
        <taxon>Aspergillaceae</taxon>
        <taxon>Aspergillus</taxon>
        <taxon>Aspergillus subgen. Nidulantes</taxon>
    </lineage>
</organism>
<proteinExistence type="evidence at protein level"/>
<reference key="1">
    <citation type="journal article" date="2005" name="Nature">
        <title>Sequencing of Aspergillus nidulans and comparative analysis with A. fumigatus and A. oryzae.</title>
        <authorList>
            <person name="Galagan J.E."/>
            <person name="Calvo S.E."/>
            <person name="Cuomo C."/>
            <person name="Ma L.-J."/>
            <person name="Wortman J.R."/>
            <person name="Batzoglou S."/>
            <person name="Lee S.-I."/>
            <person name="Bastuerkmen M."/>
            <person name="Spevak C.C."/>
            <person name="Clutterbuck J."/>
            <person name="Kapitonov V."/>
            <person name="Jurka J."/>
            <person name="Scazzocchio C."/>
            <person name="Farman M.L."/>
            <person name="Butler J."/>
            <person name="Purcell S."/>
            <person name="Harris S."/>
            <person name="Braus G.H."/>
            <person name="Draht O."/>
            <person name="Busch S."/>
            <person name="D'Enfert C."/>
            <person name="Bouchier C."/>
            <person name="Goldman G.H."/>
            <person name="Bell-Pedersen D."/>
            <person name="Griffiths-Jones S."/>
            <person name="Doonan J.H."/>
            <person name="Yu J."/>
            <person name="Vienken K."/>
            <person name="Pain A."/>
            <person name="Freitag M."/>
            <person name="Selker E.U."/>
            <person name="Archer D.B."/>
            <person name="Penalva M.A."/>
            <person name="Oakley B.R."/>
            <person name="Momany M."/>
            <person name="Tanaka T."/>
            <person name="Kumagai T."/>
            <person name="Asai K."/>
            <person name="Machida M."/>
            <person name="Nierman W.C."/>
            <person name="Denning D.W."/>
            <person name="Caddick M.X."/>
            <person name="Hynes M."/>
            <person name="Paoletti M."/>
            <person name="Fischer R."/>
            <person name="Miller B.L."/>
            <person name="Dyer P.S."/>
            <person name="Sachs M.S."/>
            <person name="Osmani S.A."/>
            <person name="Birren B.W."/>
        </authorList>
    </citation>
    <scope>NUCLEOTIDE SEQUENCE [LARGE SCALE GENOMIC DNA]</scope>
    <source>
        <strain>FGSC A4 / ATCC 38163 / CBS 112.46 / NRRL 194 / M139</strain>
    </source>
</reference>
<reference key="2">
    <citation type="journal article" date="2009" name="Fungal Genet. Biol.">
        <title>The 2008 update of the Aspergillus nidulans genome annotation: a community effort.</title>
        <authorList>
            <person name="Wortman J.R."/>
            <person name="Gilsenan J.M."/>
            <person name="Joardar V."/>
            <person name="Deegan J."/>
            <person name="Clutterbuck J."/>
            <person name="Andersen M.R."/>
            <person name="Archer D."/>
            <person name="Bencina M."/>
            <person name="Braus G."/>
            <person name="Coutinho P."/>
            <person name="von Dohren H."/>
            <person name="Doonan J."/>
            <person name="Driessen A.J."/>
            <person name="Durek P."/>
            <person name="Espeso E."/>
            <person name="Fekete E."/>
            <person name="Flipphi M."/>
            <person name="Estrada C.G."/>
            <person name="Geysens S."/>
            <person name="Goldman G."/>
            <person name="de Groot P.W."/>
            <person name="Hansen K."/>
            <person name="Harris S.D."/>
            <person name="Heinekamp T."/>
            <person name="Helmstaedt K."/>
            <person name="Henrissat B."/>
            <person name="Hofmann G."/>
            <person name="Homan T."/>
            <person name="Horio T."/>
            <person name="Horiuchi H."/>
            <person name="James S."/>
            <person name="Jones M."/>
            <person name="Karaffa L."/>
            <person name="Karanyi Z."/>
            <person name="Kato M."/>
            <person name="Keller N."/>
            <person name="Kelly D.E."/>
            <person name="Kiel J.A."/>
            <person name="Kim J.M."/>
            <person name="van der Klei I.J."/>
            <person name="Klis F.M."/>
            <person name="Kovalchuk A."/>
            <person name="Krasevec N."/>
            <person name="Kubicek C.P."/>
            <person name="Liu B."/>
            <person name="Maccabe A."/>
            <person name="Meyer V."/>
            <person name="Mirabito P."/>
            <person name="Miskei M."/>
            <person name="Mos M."/>
            <person name="Mullins J."/>
            <person name="Nelson D.R."/>
            <person name="Nielsen J."/>
            <person name="Oakley B.R."/>
            <person name="Osmani S.A."/>
            <person name="Pakula T."/>
            <person name="Paszewski A."/>
            <person name="Paulsen I."/>
            <person name="Pilsyk S."/>
            <person name="Pocsi I."/>
            <person name="Punt P.J."/>
            <person name="Ram A.F."/>
            <person name="Ren Q."/>
            <person name="Robellet X."/>
            <person name="Robson G."/>
            <person name="Seiboth B."/>
            <person name="van Solingen P."/>
            <person name="Specht T."/>
            <person name="Sun J."/>
            <person name="Taheri-Talesh N."/>
            <person name="Takeshita N."/>
            <person name="Ussery D."/>
            <person name="vanKuyk P.A."/>
            <person name="Visser H."/>
            <person name="van de Vondervoort P.J."/>
            <person name="de Vries R.P."/>
            <person name="Walton J."/>
            <person name="Xiang X."/>
            <person name="Xiong Y."/>
            <person name="Zeng A.P."/>
            <person name="Brandt B.W."/>
            <person name="Cornell M.J."/>
            <person name="van den Hondel C.A."/>
            <person name="Visser J."/>
            <person name="Oliver S.G."/>
            <person name="Turner G."/>
        </authorList>
    </citation>
    <scope>GENOME REANNOTATION</scope>
    <source>
        <strain>FGSC A4 / ATCC 38163 / CBS 112.46 / NRRL 194 / M139</strain>
    </source>
</reference>
<reference key="3">
    <citation type="journal article" date="2011" name="Pigment Cell Melanoma Res.">
        <title>2,4,6-Octatrienoic acid is a novel promoter of melanogenesis and antioxidant defence in normal human melanocytes via PPAR-gamma activation.</title>
        <authorList>
            <person name="Flori E."/>
            <person name="Mastrofrancesco A."/>
            <person name="Kovacs D."/>
            <person name="Ramot Y."/>
            <person name="Briganti S."/>
            <person name="Bellei B."/>
            <person name="Paus R."/>
            <person name="Picardo M."/>
        </authorList>
    </citation>
    <scope>BIOTECHNOLOGY</scope>
</reference>
<reference key="4">
    <citation type="journal article" date="2018" name="ACS Chem. Biol.">
        <title>Hybrid transcription factor engineering activates the silent secondary metabolite gene cluster for (+)-asperlin in Aspergillus nidulans.</title>
        <authorList>
            <person name="Grau M.F."/>
            <person name="Entwistle R."/>
            <person name="Chiang Y.M."/>
            <person name="Ahuja M."/>
            <person name="Oakley C.E."/>
            <person name="Akashi T."/>
            <person name="Wang C.C.C."/>
            <person name="Todd R.B."/>
            <person name="Oakley B.R."/>
        </authorList>
    </citation>
    <scope>IDENTIFICATION</scope>
    <scope>DISRUPTION PHENOTYPE</scope>
    <scope>FUNCTION</scope>
    <scope>INDUCTION</scope>
    <scope>PATHWAY</scope>
</reference>
<name>ALNB_EMENI</name>
<accession>C8VJR6</accession>